<evidence type="ECO:0000250" key="1">
    <source>
        <dbReference type="UniProtKB" id="P33371"/>
    </source>
</evidence>
<evidence type="ECO:0000250" key="2">
    <source>
        <dbReference type="UniProtKB" id="Q5SMC7"/>
    </source>
</evidence>
<evidence type="ECO:0000305" key="3"/>
<protein>
    <recommendedName>
        <fullName>Probable tRNA-dihydrouridine synthase 1</fullName>
        <ecNumber>1.3.1.-</ecNumber>
    </recommendedName>
</protein>
<comment type="function">
    <text evidence="1">Catalyzes the synthesis of 5,6-dihydrouridine (D), a modified base found in the D-loop of most tRNAs, via the reduction of the C5-C6 double bond in target uridines.</text>
</comment>
<comment type="catalytic activity">
    <reaction evidence="1">
        <text>a 5,6-dihydrouridine in tRNA + NAD(+) = a uridine in tRNA + NADH + H(+)</text>
        <dbReference type="Rhea" id="RHEA:54452"/>
        <dbReference type="Rhea" id="RHEA-COMP:13339"/>
        <dbReference type="Rhea" id="RHEA-COMP:13887"/>
        <dbReference type="ChEBI" id="CHEBI:15378"/>
        <dbReference type="ChEBI" id="CHEBI:57540"/>
        <dbReference type="ChEBI" id="CHEBI:57945"/>
        <dbReference type="ChEBI" id="CHEBI:65315"/>
        <dbReference type="ChEBI" id="CHEBI:74443"/>
    </reaction>
</comment>
<comment type="catalytic activity">
    <reaction evidence="1">
        <text>a 5,6-dihydrouridine in tRNA + NADP(+) = a uridine in tRNA + NADPH + H(+)</text>
        <dbReference type="Rhea" id="RHEA:23624"/>
        <dbReference type="Rhea" id="RHEA-COMP:13339"/>
        <dbReference type="Rhea" id="RHEA-COMP:13887"/>
        <dbReference type="ChEBI" id="CHEBI:15378"/>
        <dbReference type="ChEBI" id="CHEBI:57783"/>
        <dbReference type="ChEBI" id="CHEBI:58349"/>
        <dbReference type="ChEBI" id="CHEBI:65315"/>
        <dbReference type="ChEBI" id="CHEBI:74443"/>
    </reaction>
</comment>
<comment type="cofactor">
    <cofactor evidence="1">
        <name>FMN</name>
        <dbReference type="ChEBI" id="CHEBI:58210"/>
    </cofactor>
</comment>
<comment type="similarity">
    <text evidence="3">Belongs to the Dus family.</text>
</comment>
<keyword id="KW-0285">Flavoprotein</keyword>
<keyword id="KW-0288">FMN</keyword>
<keyword id="KW-0521">NADP</keyword>
<keyword id="KW-0560">Oxidoreductase</keyword>
<keyword id="KW-1185">Reference proteome</keyword>
<keyword id="KW-0694">RNA-binding</keyword>
<keyword id="KW-0819">tRNA processing</keyword>
<keyword id="KW-0820">tRNA-binding</keyword>
<gene>
    <name type="primary">dus1</name>
    <name type="synonym">yacF</name>
    <name type="ordered locus">BSU00810</name>
</gene>
<feature type="chain" id="PRO_0000162132" description="Probable tRNA-dihydrouridine synthase 1">
    <location>
        <begin position="1"/>
        <end position="333"/>
    </location>
</feature>
<feature type="active site" description="Proton donor" evidence="2">
    <location>
        <position position="102"/>
    </location>
</feature>
<feature type="binding site" evidence="1">
    <location>
        <begin position="17"/>
        <end position="19"/>
    </location>
    <ligand>
        <name>FMN</name>
        <dbReference type="ChEBI" id="CHEBI:58210"/>
    </ligand>
</feature>
<feature type="binding site" evidence="1">
    <location>
        <position position="71"/>
    </location>
    <ligand>
        <name>FMN</name>
        <dbReference type="ChEBI" id="CHEBI:58210"/>
    </ligand>
</feature>
<feature type="binding site" evidence="1">
    <location>
        <position position="141"/>
    </location>
    <ligand>
        <name>FMN</name>
        <dbReference type="ChEBI" id="CHEBI:58210"/>
    </ligand>
</feature>
<feature type="binding site" evidence="1">
    <location>
        <begin position="202"/>
        <end position="204"/>
    </location>
    <ligand>
        <name>FMN</name>
        <dbReference type="ChEBI" id="CHEBI:58210"/>
    </ligand>
</feature>
<feature type="binding site" evidence="1">
    <location>
        <begin position="226"/>
        <end position="227"/>
    </location>
    <ligand>
        <name>FMN</name>
        <dbReference type="ChEBI" id="CHEBI:58210"/>
    </ligand>
</feature>
<organism>
    <name type="scientific">Bacillus subtilis (strain 168)</name>
    <dbReference type="NCBI Taxonomy" id="224308"/>
    <lineage>
        <taxon>Bacteria</taxon>
        <taxon>Bacillati</taxon>
        <taxon>Bacillota</taxon>
        <taxon>Bacilli</taxon>
        <taxon>Bacillales</taxon>
        <taxon>Bacillaceae</taxon>
        <taxon>Bacillus</taxon>
    </lineage>
</organism>
<dbReference type="EC" id="1.3.1.-"/>
<dbReference type="EMBL" id="D26185">
    <property type="protein sequence ID" value="BAA05315.1"/>
    <property type="molecule type" value="Genomic_DNA"/>
</dbReference>
<dbReference type="EMBL" id="AL009126">
    <property type="protein sequence ID" value="CAB11857.1"/>
    <property type="molecule type" value="Genomic_DNA"/>
</dbReference>
<dbReference type="PIR" id="S66110">
    <property type="entry name" value="S66110"/>
</dbReference>
<dbReference type="SMR" id="P37567"/>
<dbReference type="FunCoup" id="P37567">
    <property type="interactions" value="810"/>
</dbReference>
<dbReference type="STRING" id="224308.BSU00810"/>
<dbReference type="PaxDb" id="224308-BSU00810"/>
<dbReference type="EnsemblBacteria" id="CAB11857">
    <property type="protein sequence ID" value="CAB11857"/>
    <property type="gene ID" value="BSU_00810"/>
</dbReference>
<dbReference type="GeneID" id="936924"/>
<dbReference type="KEGG" id="bsu:BSU00810"/>
<dbReference type="PATRIC" id="fig|224308.179.peg.81"/>
<dbReference type="eggNOG" id="COG0042">
    <property type="taxonomic scope" value="Bacteria"/>
</dbReference>
<dbReference type="InParanoid" id="P37567"/>
<dbReference type="OrthoDB" id="9764501at2"/>
<dbReference type="PhylomeDB" id="P37567"/>
<dbReference type="BioCyc" id="BSUB:BSU00810-MONOMER"/>
<dbReference type="Proteomes" id="UP000001570">
    <property type="component" value="Chromosome"/>
</dbReference>
<dbReference type="GO" id="GO:0050660">
    <property type="term" value="F:flavin adenine dinucleotide binding"/>
    <property type="evidence" value="ECO:0007669"/>
    <property type="project" value="InterPro"/>
</dbReference>
<dbReference type="GO" id="GO:0000049">
    <property type="term" value="F:tRNA binding"/>
    <property type="evidence" value="ECO:0007669"/>
    <property type="project" value="UniProtKB-KW"/>
</dbReference>
<dbReference type="GO" id="GO:0017150">
    <property type="term" value="F:tRNA dihydrouridine synthase activity"/>
    <property type="evidence" value="ECO:0007669"/>
    <property type="project" value="InterPro"/>
</dbReference>
<dbReference type="CDD" id="cd02801">
    <property type="entry name" value="DUS_like_FMN"/>
    <property type="match status" value="1"/>
</dbReference>
<dbReference type="Gene3D" id="3.20.20.70">
    <property type="entry name" value="Aldolase class I"/>
    <property type="match status" value="1"/>
</dbReference>
<dbReference type="Gene3D" id="1.10.1200.80">
    <property type="entry name" value="Putative flavin oxidoreducatase, domain 2"/>
    <property type="match status" value="1"/>
</dbReference>
<dbReference type="InterPro" id="IPR013785">
    <property type="entry name" value="Aldolase_TIM"/>
</dbReference>
<dbReference type="InterPro" id="IPR035587">
    <property type="entry name" value="DUS-like_FMN-bd"/>
</dbReference>
<dbReference type="InterPro" id="IPR001269">
    <property type="entry name" value="DUS_fam"/>
</dbReference>
<dbReference type="InterPro" id="IPR004652">
    <property type="entry name" value="DusB-like"/>
</dbReference>
<dbReference type="InterPro" id="IPR024036">
    <property type="entry name" value="tRNA-dHydroUridine_Synthase_C"/>
</dbReference>
<dbReference type="InterPro" id="IPR018517">
    <property type="entry name" value="tRNA_hU_synthase_CS"/>
</dbReference>
<dbReference type="NCBIfam" id="TIGR00737">
    <property type="entry name" value="nifR3_yhdG"/>
    <property type="match status" value="1"/>
</dbReference>
<dbReference type="PANTHER" id="PTHR45846">
    <property type="entry name" value="TRNA-DIHYDROURIDINE(47) SYNTHASE [NAD(P)(+)]-LIKE"/>
    <property type="match status" value="1"/>
</dbReference>
<dbReference type="PANTHER" id="PTHR45846:SF1">
    <property type="entry name" value="TRNA-DIHYDROURIDINE(47) SYNTHASE [NAD(P)(+)]-LIKE"/>
    <property type="match status" value="1"/>
</dbReference>
<dbReference type="Pfam" id="PF01207">
    <property type="entry name" value="Dus"/>
    <property type="match status" value="1"/>
</dbReference>
<dbReference type="PIRSF" id="PIRSF006621">
    <property type="entry name" value="Dus"/>
    <property type="match status" value="1"/>
</dbReference>
<dbReference type="SUPFAM" id="SSF51395">
    <property type="entry name" value="FMN-linked oxidoreductases"/>
    <property type="match status" value="1"/>
</dbReference>
<dbReference type="PROSITE" id="PS01136">
    <property type="entry name" value="UPF0034"/>
    <property type="match status" value="1"/>
</dbReference>
<proteinExistence type="inferred from homology"/>
<accession>P37567</accession>
<name>DUS1_BACSU</name>
<reference key="1">
    <citation type="journal article" date="1994" name="DNA Res.">
        <title>Systematic sequencing of the 180 kilobase region of the Bacillus subtilis chromosome containing the replication origin.</title>
        <authorList>
            <person name="Ogasawara N."/>
            <person name="Nakai S."/>
            <person name="Yoshikawa H."/>
        </authorList>
    </citation>
    <scope>NUCLEOTIDE SEQUENCE [GENOMIC DNA]</scope>
    <source>
        <strain>168</strain>
    </source>
</reference>
<reference key="2">
    <citation type="journal article" date="1997" name="Nature">
        <title>The complete genome sequence of the Gram-positive bacterium Bacillus subtilis.</title>
        <authorList>
            <person name="Kunst F."/>
            <person name="Ogasawara N."/>
            <person name="Moszer I."/>
            <person name="Albertini A.M."/>
            <person name="Alloni G."/>
            <person name="Azevedo V."/>
            <person name="Bertero M.G."/>
            <person name="Bessieres P."/>
            <person name="Bolotin A."/>
            <person name="Borchert S."/>
            <person name="Borriss R."/>
            <person name="Boursier L."/>
            <person name="Brans A."/>
            <person name="Braun M."/>
            <person name="Brignell S.C."/>
            <person name="Bron S."/>
            <person name="Brouillet S."/>
            <person name="Bruschi C.V."/>
            <person name="Caldwell B."/>
            <person name="Capuano V."/>
            <person name="Carter N.M."/>
            <person name="Choi S.-K."/>
            <person name="Codani J.-J."/>
            <person name="Connerton I.F."/>
            <person name="Cummings N.J."/>
            <person name="Daniel R.A."/>
            <person name="Denizot F."/>
            <person name="Devine K.M."/>
            <person name="Duesterhoeft A."/>
            <person name="Ehrlich S.D."/>
            <person name="Emmerson P.T."/>
            <person name="Entian K.-D."/>
            <person name="Errington J."/>
            <person name="Fabret C."/>
            <person name="Ferrari E."/>
            <person name="Foulger D."/>
            <person name="Fritz C."/>
            <person name="Fujita M."/>
            <person name="Fujita Y."/>
            <person name="Fuma S."/>
            <person name="Galizzi A."/>
            <person name="Galleron N."/>
            <person name="Ghim S.-Y."/>
            <person name="Glaser P."/>
            <person name="Goffeau A."/>
            <person name="Golightly E.J."/>
            <person name="Grandi G."/>
            <person name="Guiseppi G."/>
            <person name="Guy B.J."/>
            <person name="Haga K."/>
            <person name="Haiech J."/>
            <person name="Harwood C.R."/>
            <person name="Henaut A."/>
            <person name="Hilbert H."/>
            <person name="Holsappel S."/>
            <person name="Hosono S."/>
            <person name="Hullo M.-F."/>
            <person name="Itaya M."/>
            <person name="Jones L.-M."/>
            <person name="Joris B."/>
            <person name="Karamata D."/>
            <person name="Kasahara Y."/>
            <person name="Klaerr-Blanchard M."/>
            <person name="Klein C."/>
            <person name="Kobayashi Y."/>
            <person name="Koetter P."/>
            <person name="Koningstein G."/>
            <person name="Krogh S."/>
            <person name="Kumano M."/>
            <person name="Kurita K."/>
            <person name="Lapidus A."/>
            <person name="Lardinois S."/>
            <person name="Lauber J."/>
            <person name="Lazarevic V."/>
            <person name="Lee S.-M."/>
            <person name="Levine A."/>
            <person name="Liu H."/>
            <person name="Masuda S."/>
            <person name="Mauel C."/>
            <person name="Medigue C."/>
            <person name="Medina N."/>
            <person name="Mellado R.P."/>
            <person name="Mizuno M."/>
            <person name="Moestl D."/>
            <person name="Nakai S."/>
            <person name="Noback M."/>
            <person name="Noone D."/>
            <person name="O'Reilly M."/>
            <person name="Ogawa K."/>
            <person name="Ogiwara A."/>
            <person name="Oudega B."/>
            <person name="Park S.-H."/>
            <person name="Parro V."/>
            <person name="Pohl T.M."/>
            <person name="Portetelle D."/>
            <person name="Porwollik S."/>
            <person name="Prescott A.M."/>
            <person name="Presecan E."/>
            <person name="Pujic P."/>
            <person name="Purnelle B."/>
            <person name="Rapoport G."/>
            <person name="Rey M."/>
            <person name="Reynolds S."/>
            <person name="Rieger M."/>
            <person name="Rivolta C."/>
            <person name="Rocha E."/>
            <person name="Roche B."/>
            <person name="Rose M."/>
            <person name="Sadaie Y."/>
            <person name="Sato T."/>
            <person name="Scanlan E."/>
            <person name="Schleich S."/>
            <person name="Schroeter R."/>
            <person name="Scoffone F."/>
            <person name="Sekiguchi J."/>
            <person name="Sekowska A."/>
            <person name="Seror S.J."/>
            <person name="Serror P."/>
            <person name="Shin B.-S."/>
            <person name="Soldo B."/>
            <person name="Sorokin A."/>
            <person name="Tacconi E."/>
            <person name="Takagi T."/>
            <person name="Takahashi H."/>
            <person name="Takemaru K."/>
            <person name="Takeuchi M."/>
            <person name="Tamakoshi A."/>
            <person name="Tanaka T."/>
            <person name="Terpstra P."/>
            <person name="Tognoni A."/>
            <person name="Tosato V."/>
            <person name="Uchiyama S."/>
            <person name="Vandenbol M."/>
            <person name="Vannier F."/>
            <person name="Vassarotti A."/>
            <person name="Viari A."/>
            <person name="Wambutt R."/>
            <person name="Wedler E."/>
            <person name="Wedler H."/>
            <person name="Weitzenegger T."/>
            <person name="Winters P."/>
            <person name="Wipat A."/>
            <person name="Yamamoto H."/>
            <person name="Yamane K."/>
            <person name="Yasumoto K."/>
            <person name="Yata K."/>
            <person name="Yoshida K."/>
            <person name="Yoshikawa H.-F."/>
            <person name="Zumstein E."/>
            <person name="Yoshikawa H."/>
            <person name="Danchin A."/>
        </authorList>
    </citation>
    <scope>NUCLEOTIDE SEQUENCE [LARGE SCALE GENOMIC DNA]</scope>
    <source>
        <strain>168</strain>
    </source>
</reference>
<sequence>MFKIGDIQLKNRVVLAPMAGVCNSAFRLTVKEFGAGLVCAEMVSDKAILYNNARTMGMLYIDEREKPLSLQIFGGKKETLVEAAKFVDQNTTADIIDINMGCPVPKITKCDAGAKWLLDPDKIYEMVSAVVDAVNKPVTVKMRMGWDEDHIFAVKNAQAVERAGGKAVALHGRTRVQMYEGTANWDIIKEVKQSVSIPVIGNGDVKTPQDAKRMLDETGVDGVMIGRAALGNPWMIYRTVQYLETGKLKEEPQVREKMAVCKLHLDRLIDLKGENVAVREMRKHAAWYLKGVKGNANVRNEINHCETREEFVQLLDAFTVEVEAKELQNAKVG</sequence>